<organism>
    <name type="scientific">Cupriavidus pinatubonensis (strain JMP 134 / LMG 1197)</name>
    <name type="common">Cupriavidus necator (strain JMP 134)</name>
    <dbReference type="NCBI Taxonomy" id="264198"/>
    <lineage>
        <taxon>Bacteria</taxon>
        <taxon>Pseudomonadati</taxon>
        <taxon>Pseudomonadota</taxon>
        <taxon>Betaproteobacteria</taxon>
        <taxon>Burkholderiales</taxon>
        <taxon>Burkholderiaceae</taxon>
        <taxon>Cupriavidus</taxon>
    </lineage>
</organism>
<sequence length="294" mass="32894">MRIILITGISGSGKSVALNVLEDAGFYCVDNLPAQFIPDLARYLASEGYTHLGVATDIRSRESLEHLPDTVRELAETHQVEVLFLTASTDALVQRYSETRRRHPLSILTDGVPGSDGEPAFNDRALMEAIEMERELLSPLAESAHRIDTSNVRTNTLRSWIKELIREDSERLTLLFESFGFKHGVPSDADLVFDVRSLPNPYYDLALRPLTGRDGPVIDFLQAQPMVLAMAEDIRAYVEKWLPSFIADNRSYLTVAIGCTGGQHRSVYIAERLANYFRAHGNVLVRHRELAPAT</sequence>
<keyword id="KW-0067">ATP-binding</keyword>
<keyword id="KW-0342">GTP-binding</keyword>
<keyword id="KW-0547">Nucleotide-binding</keyword>
<gene>
    <name type="ordered locus">Reut_A0350</name>
</gene>
<dbReference type="EMBL" id="CP000090">
    <property type="protein sequence ID" value="AAZ59732.1"/>
    <property type="molecule type" value="Genomic_DNA"/>
</dbReference>
<dbReference type="SMR" id="Q476F1"/>
<dbReference type="STRING" id="264198.Reut_A0350"/>
<dbReference type="KEGG" id="reu:Reut_A0350"/>
<dbReference type="eggNOG" id="COG1660">
    <property type="taxonomic scope" value="Bacteria"/>
</dbReference>
<dbReference type="HOGENOM" id="CLU_059558_1_1_4"/>
<dbReference type="OrthoDB" id="9784461at2"/>
<dbReference type="GO" id="GO:0005524">
    <property type="term" value="F:ATP binding"/>
    <property type="evidence" value="ECO:0007669"/>
    <property type="project" value="UniProtKB-UniRule"/>
</dbReference>
<dbReference type="GO" id="GO:0005525">
    <property type="term" value="F:GTP binding"/>
    <property type="evidence" value="ECO:0007669"/>
    <property type="project" value="UniProtKB-UniRule"/>
</dbReference>
<dbReference type="HAMAP" id="MF_00636">
    <property type="entry name" value="RapZ_like"/>
    <property type="match status" value="1"/>
</dbReference>
<dbReference type="InterPro" id="IPR027417">
    <property type="entry name" value="P-loop_NTPase"/>
</dbReference>
<dbReference type="InterPro" id="IPR005337">
    <property type="entry name" value="RapZ-like"/>
</dbReference>
<dbReference type="InterPro" id="IPR053930">
    <property type="entry name" value="RapZ-like_N"/>
</dbReference>
<dbReference type="InterPro" id="IPR053931">
    <property type="entry name" value="RapZ_C"/>
</dbReference>
<dbReference type="NCBIfam" id="NF003828">
    <property type="entry name" value="PRK05416.1"/>
    <property type="match status" value="1"/>
</dbReference>
<dbReference type="PANTHER" id="PTHR30448">
    <property type="entry name" value="RNASE ADAPTER PROTEIN RAPZ"/>
    <property type="match status" value="1"/>
</dbReference>
<dbReference type="PANTHER" id="PTHR30448:SF0">
    <property type="entry name" value="RNASE ADAPTER PROTEIN RAPZ"/>
    <property type="match status" value="1"/>
</dbReference>
<dbReference type="Pfam" id="PF22740">
    <property type="entry name" value="PapZ_C"/>
    <property type="match status" value="1"/>
</dbReference>
<dbReference type="Pfam" id="PF03668">
    <property type="entry name" value="RapZ-like_N"/>
    <property type="match status" value="1"/>
</dbReference>
<dbReference type="PIRSF" id="PIRSF005052">
    <property type="entry name" value="P-loopkin"/>
    <property type="match status" value="1"/>
</dbReference>
<dbReference type="SUPFAM" id="SSF52540">
    <property type="entry name" value="P-loop containing nucleoside triphosphate hydrolases"/>
    <property type="match status" value="1"/>
</dbReference>
<reference key="1">
    <citation type="journal article" date="2010" name="PLoS ONE">
        <title>The complete multipartite genome sequence of Cupriavidus necator JMP134, a versatile pollutant degrader.</title>
        <authorList>
            <person name="Lykidis A."/>
            <person name="Perez-Pantoja D."/>
            <person name="Ledger T."/>
            <person name="Mavromatis K."/>
            <person name="Anderson I.J."/>
            <person name="Ivanova N.N."/>
            <person name="Hooper S.D."/>
            <person name="Lapidus A."/>
            <person name="Lucas S."/>
            <person name="Gonzalez B."/>
            <person name="Kyrpides N.C."/>
        </authorList>
    </citation>
    <scope>NUCLEOTIDE SEQUENCE [LARGE SCALE GENOMIC DNA]</scope>
    <source>
        <strain>JMP134 / LMG 1197</strain>
    </source>
</reference>
<proteinExistence type="inferred from homology"/>
<evidence type="ECO:0000255" key="1">
    <source>
        <dbReference type="HAMAP-Rule" id="MF_00636"/>
    </source>
</evidence>
<protein>
    <recommendedName>
        <fullName evidence="1">Nucleotide-binding protein Reut_A0350</fullName>
    </recommendedName>
</protein>
<comment type="function">
    <text evidence="1">Displays ATPase and GTPase activities.</text>
</comment>
<comment type="similarity">
    <text evidence="1">Belongs to the RapZ-like family.</text>
</comment>
<name>Y350_CUPPJ</name>
<feature type="chain" id="PRO_0000258987" description="Nucleotide-binding protein Reut_A0350">
    <location>
        <begin position="1"/>
        <end position="294"/>
    </location>
</feature>
<feature type="binding site" evidence="1">
    <location>
        <begin position="8"/>
        <end position="15"/>
    </location>
    <ligand>
        <name>ATP</name>
        <dbReference type="ChEBI" id="CHEBI:30616"/>
    </ligand>
</feature>
<feature type="binding site" evidence="1">
    <location>
        <begin position="57"/>
        <end position="60"/>
    </location>
    <ligand>
        <name>GTP</name>
        <dbReference type="ChEBI" id="CHEBI:37565"/>
    </ligand>
</feature>
<accession>Q476F1</accession>